<organism>
    <name type="scientific">Amanita fuligineoides</name>
    <dbReference type="NCBI Taxonomy" id="580329"/>
    <lineage>
        <taxon>Eukaryota</taxon>
        <taxon>Fungi</taxon>
        <taxon>Dikarya</taxon>
        <taxon>Basidiomycota</taxon>
        <taxon>Agaricomycotina</taxon>
        <taxon>Agaricomycetes</taxon>
        <taxon>Agaricomycetidae</taxon>
        <taxon>Agaricales</taxon>
        <taxon>Pluteineae</taxon>
        <taxon>Amanitaceae</taxon>
        <taxon>Amanita</taxon>
    </lineage>
</organism>
<evidence type="ECO:0000250" key="1">
    <source>
        <dbReference type="UniProtKB" id="A0A067SLB9"/>
    </source>
</evidence>
<evidence type="ECO:0000250" key="2">
    <source>
        <dbReference type="UniProtKB" id="A8W7M4"/>
    </source>
</evidence>
<evidence type="ECO:0000250" key="3">
    <source>
        <dbReference type="UniProtKB" id="P85421"/>
    </source>
</evidence>
<evidence type="ECO:0000303" key="4">
    <source>
    </source>
</evidence>
<evidence type="ECO:0000303" key="5">
    <source>
    </source>
</evidence>
<evidence type="ECO:0000305" key="6"/>
<evidence type="ECO:0000305" key="7">
    <source>
    </source>
</evidence>
<proteinExistence type="inferred from homology"/>
<dbReference type="EMBL" id="KF546284">
    <property type="protein sequence ID" value="AHX98308.1"/>
    <property type="molecule type" value="Genomic_DNA"/>
</dbReference>
<dbReference type="GO" id="GO:0090729">
    <property type="term" value="F:toxin activity"/>
    <property type="evidence" value="ECO:0007669"/>
    <property type="project" value="UniProtKB-KW"/>
</dbReference>
<keyword id="KW-0379">Hydroxylation</keyword>
<keyword id="KW-0883">Thioether bond</keyword>
<keyword id="KW-0800">Toxin</keyword>
<protein>
    <recommendedName>
        <fullName evidence="5">Alpha-amanitin proprotein</fullName>
    </recommendedName>
    <component>
        <recommendedName>
            <fullName evidence="5">Alpha-amanitin</fullName>
        </recommendedName>
        <alternativeName>
            <fullName evidence="5">Amatoxin</fullName>
        </alternativeName>
        <alternativeName>
            <fullName evidence="3">Gamma-amanitin</fullName>
        </alternativeName>
    </component>
</protein>
<accession>A0A023UCA6</accession>
<sequence length="23" mass="2375">IWGIGCNPCVGDEVTALITRGEA</sequence>
<reference key="1">
    <citation type="journal article" date="2014" name="Toxicon">
        <title>The molecular diversity of toxin gene families in lethal Amanita mushrooms.</title>
        <authorList>
            <person name="Li P."/>
            <person name="Deng W."/>
            <person name="Li T."/>
        </authorList>
    </citation>
    <scope>NUCLEOTIDE SEQUENCE [GENOMIC DNA]</scope>
    <scope>FUNCTION</scope>
</reference>
<reference key="2">
    <citation type="journal article" date="2002" name="J. Toxicol. Clin. Toxicol.">
        <title>Treatment of amatoxin poisoning: 20-year retrospective analysis.</title>
        <authorList>
            <person name="Enjalbert F."/>
            <person name="Rapior S."/>
            <person name="Nouguier-Soule J."/>
            <person name="Guillon S."/>
            <person name="Amouroux N."/>
            <person name="Cabot C."/>
        </authorList>
    </citation>
    <scope>REVIEW ON TOXICITY</scope>
</reference>
<name>AAMA2_AMAFL</name>
<comment type="function">
    <text evidence="7">Major toxin belonging to the bicyclic octapeptides amatoxins that acts by binding non-competitively to RNA polymerase II and greatly slowing the elongation of transcripts from target promoters (PubMed:24613547).</text>
</comment>
<comment type="PTM">
    <text evidence="1 7">Processed by the macrocyclase-peptidase enzyme POPB to yield a toxic cyclic decapeptide (PubMed:24613547). POPB first removes 10 residues from the N-terminus (By similarity). Conformational trapping of the remaining peptide forces the enzyme to release this intermediate rather than proceed to macrocyclization (By similarity). The enzyme rebinds the remaining peptide in a different conformation and catalyzes macrocyclization of the N-terminal 8 residues (By similarity).</text>
</comment>
<comment type="miscellaneous">
    <text evidence="4">The typical symptoms of amatoxin poisoning are gastro-intestinal distress beginning 6-12 hours after ingestion, a remission phase lasting 12-24 hours, and progressive loss of liver function culminating in death within 3-5 days (PubMed:12475187). One of the few effective treatments is liver transplantation (PubMed:12475187).</text>
</comment>
<comment type="similarity">
    <text evidence="6">Belongs to the MSDIN fungal toxin family.</text>
</comment>
<feature type="peptide" id="PRO_0000443576" description="Alpha-amanitin" evidence="2">
    <location>
        <begin position="1"/>
        <end position="8"/>
    </location>
</feature>
<feature type="propeptide" id="PRO_0000443577" evidence="2">
    <location>
        <begin position="9"/>
        <end position="23"/>
    </location>
</feature>
<feature type="modified residue" description="(3R,4R)-4,5-dihydroxyisoleucine; in form alpha-amanitin" evidence="3">
    <location>
        <position position="1"/>
    </location>
</feature>
<feature type="modified residue" description="(3R,4S)-4-hydroxyisoleucine; in form gamma-amanitin" evidence="3">
    <location>
        <position position="1"/>
    </location>
</feature>
<feature type="modified residue" description="4-hydroxyproline" evidence="3">
    <location>
        <position position="8"/>
    </location>
</feature>
<feature type="cross-link" description="Cyclopeptide (Ile-Pro)" evidence="2">
    <location>
        <begin position="1"/>
        <end position="8"/>
    </location>
</feature>
<feature type="cross-link" description="2'-cysteinyl-6'-hydroxytryptophan sulfoxide (Trp-Cys)" evidence="3">
    <location>
        <begin position="2"/>
        <end position="6"/>
    </location>
</feature>
<feature type="non-terminal residue" evidence="6">
    <location>
        <position position="1"/>
    </location>
</feature>